<reference key="1">
    <citation type="journal article" date="2007" name="Proc. Natl. Acad. Sci. U.S.A.">
        <title>Genome and proteome of long-chain alkane degrading Geobacillus thermodenitrificans NG80-2 isolated from a deep-subsurface oil reservoir.</title>
        <authorList>
            <person name="Feng L."/>
            <person name="Wang W."/>
            <person name="Cheng J."/>
            <person name="Ren Y."/>
            <person name="Zhao G."/>
            <person name="Gao C."/>
            <person name="Tang Y."/>
            <person name="Liu X."/>
            <person name="Han W."/>
            <person name="Peng X."/>
            <person name="Liu R."/>
            <person name="Wang L."/>
        </authorList>
    </citation>
    <scope>NUCLEOTIDE SEQUENCE [LARGE SCALE GENOMIC DNA]</scope>
    <source>
        <strain>NG80-2</strain>
    </source>
</reference>
<dbReference type="EMBL" id="CP000557">
    <property type="protein sequence ID" value="ABO65492.1"/>
    <property type="molecule type" value="Genomic_DNA"/>
</dbReference>
<dbReference type="RefSeq" id="WP_008881945.1">
    <property type="nucleotide sequence ID" value="NC_009328.1"/>
</dbReference>
<dbReference type="SMR" id="A4IJI8"/>
<dbReference type="GeneID" id="89612901"/>
<dbReference type="KEGG" id="gtn:GTNG_0105"/>
<dbReference type="eggNOG" id="COG0051">
    <property type="taxonomic scope" value="Bacteria"/>
</dbReference>
<dbReference type="HOGENOM" id="CLU_122625_1_3_9"/>
<dbReference type="Proteomes" id="UP000001578">
    <property type="component" value="Chromosome"/>
</dbReference>
<dbReference type="GO" id="GO:1990904">
    <property type="term" value="C:ribonucleoprotein complex"/>
    <property type="evidence" value="ECO:0007669"/>
    <property type="project" value="UniProtKB-KW"/>
</dbReference>
<dbReference type="GO" id="GO:0005840">
    <property type="term" value="C:ribosome"/>
    <property type="evidence" value="ECO:0007669"/>
    <property type="project" value="UniProtKB-KW"/>
</dbReference>
<dbReference type="GO" id="GO:0003735">
    <property type="term" value="F:structural constituent of ribosome"/>
    <property type="evidence" value="ECO:0007669"/>
    <property type="project" value="InterPro"/>
</dbReference>
<dbReference type="GO" id="GO:0000049">
    <property type="term" value="F:tRNA binding"/>
    <property type="evidence" value="ECO:0007669"/>
    <property type="project" value="UniProtKB-UniRule"/>
</dbReference>
<dbReference type="GO" id="GO:0006412">
    <property type="term" value="P:translation"/>
    <property type="evidence" value="ECO:0007669"/>
    <property type="project" value="UniProtKB-UniRule"/>
</dbReference>
<dbReference type="FunFam" id="3.30.70.600:FF:000001">
    <property type="entry name" value="30S ribosomal protein S10"/>
    <property type="match status" value="1"/>
</dbReference>
<dbReference type="Gene3D" id="3.30.70.600">
    <property type="entry name" value="Ribosomal protein S10 domain"/>
    <property type="match status" value="1"/>
</dbReference>
<dbReference type="HAMAP" id="MF_00508">
    <property type="entry name" value="Ribosomal_uS10"/>
    <property type="match status" value="1"/>
</dbReference>
<dbReference type="InterPro" id="IPR001848">
    <property type="entry name" value="Ribosomal_uS10"/>
</dbReference>
<dbReference type="InterPro" id="IPR018268">
    <property type="entry name" value="Ribosomal_uS10_CS"/>
</dbReference>
<dbReference type="InterPro" id="IPR027486">
    <property type="entry name" value="Ribosomal_uS10_dom"/>
</dbReference>
<dbReference type="InterPro" id="IPR036838">
    <property type="entry name" value="Ribosomal_uS10_dom_sf"/>
</dbReference>
<dbReference type="NCBIfam" id="NF001861">
    <property type="entry name" value="PRK00596.1"/>
    <property type="match status" value="1"/>
</dbReference>
<dbReference type="NCBIfam" id="TIGR01049">
    <property type="entry name" value="rpsJ_bact"/>
    <property type="match status" value="1"/>
</dbReference>
<dbReference type="PANTHER" id="PTHR11700">
    <property type="entry name" value="30S RIBOSOMAL PROTEIN S10 FAMILY MEMBER"/>
    <property type="match status" value="1"/>
</dbReference>
<dbReference type="Pfam" id="PF00338">
    <property type="entry name" value="Ribosomal_S10"/>
    <property type="match status" value="1"/>
</dbReference>
<dbReference type="PRINTS" id="PR00971">
    <property type="entry name" value="RIBOSOMALS10"/>
</dbReference>
<dbReference type="SMART" id="SM01403">
    <property type="entry name" value="Ribosomal_S10"/>
    <property type="match status" value="1"/>
</dbReference>
<dbReference type="SUPFAM" id="SSF54999">
    <property type="entry name" value="Ribosomal protein S10"/>
    <property type="match status" value="1"/>
</dbReference>
<dbReference type="PROSITE" id="PS00361">
    <property type="entry name" value="RIBOSOMAL_S10"/>
    <property type="match status" value="1"/>
</dbReference>
<comment type="function">
    <text evidence="1">Involved in the binding of tRNA to the ribosomes.</text>
</comment>
<comment type="subunit">
    <text evidence="1">Part of the 30S ribosomal subunit.</text>
</comment>
<comment type="similarity">
    <text evidence="1">Belongs to the universal ribosomal protein uS10 family.</text>
</comment>
<name>RS10_GEOTN</name>
<proteinExistence type="inferred from homology"/>
<protein>
    <recommendedName>
        <fullName evidence="1">Small ribosomal subunit protein uS10</fullName>
    </recommendedName>
    <alternativeName>
        <fullName evidence="2">30S ribosomal protein S10</fullName>
    </alternativeName>
</protein>
<evidence type="ECO:0000255" key="1">
    <source>
        <dbReference type="HAMAP-Rule" id="MF_00508"/>
    </source>
</evidence>
<evidence type="ECO:0000305" key="2"/>
<keyword id="KW-0687">Ribonucleoprotein</keyword>
<keyword id="KW-0689">Ribosomal protein</keyword>
<sequence length="102" mass="11780">MAKEKIRIRLKAYDHRILDQSAEKIVETAKRSGAKVSGPIPLPTERTVYTILRAVHKYKDSREQFEMRTHKRLIDIINPTPQTVDSLMRLDLPSGVDIEIKL</sequence>
<gene>
    <name evidence="1" type="primary">rpsJ</name>
    <name type="ordered locus">GTNG_0105</name>
</gene>
<accession>A4IJI8</accession>
<organism>
    <name type="scientific">Geobacillus thermodenitrificans (strain NG80-2)</name>
    <dbReference type="NCBI Taxonomy" id="420246"/>
    <lineage>
        <taxon>Bacteria</taxon>
        <taxon>Bacillati</taxon>
        <taxon>Bacillota</taxon>
        <taxon>Bacilli</taxon>
        <taxon>Bacillales</taxon>
        <taxon>Anoxybacillaceae</taxon>
        <taxon>Geobacillus</taxon>
    </lineage>
</organism>
<feature type="chain" id="PRO_1000015027" description="Small ribosomal subunit protein uS10">
    <location>
        <begin position="1"/>
        <end position="102"/>
    </location>
</feature>